<accession>Q4A5D5</accession>
<gene>
    <name evidence="1" type="primary">rpsH</name>
    <name type="ordered locus">MS53_0629</name>
</gene>
<proteinExistence type="inferred from homology"/>
<evidence type="ECO:0000255" key="1">
    <source>
        <dbReference type="HAMAP-Rule" id="MF_01302"/>
    </source>
</evidence>
<evidence type="ECO:0000305" key="2"/>
<keyword id="KW-1185">Reference proteome</keyword>
<keyword id="KW-0687">Ribonucleoprotein</keyword>
<keyword id="KW-0689">Ribosomal protein</keyword>
<keyword id="KW-0694">RNA-binding</keyword>
<keyword id="KW-0699">rRNA-binding</keyword>
<reference key="1">
    <citation type="journal article" date="2005" name="J. Bacteriol.">
        <title>Swine and poultry pathogens: the complete genome sequences of two strains of Mycoplasma hyopneumoniae and a strain of Mycoplasma synoviae.</title>
        <authorList>
            <person name="Vasconcelos A.T.R."/>
            <person name="Ferreira H.B."/>
            <person name="Bizarro C.V."/>
            <person name="Bonatto S.L."/>
            <person name="Carvalho M.O."/>
            <person name="Pinto P.M."/>
            <person name="Almeida D.F."/>
            <person name="Almeida L.G.P."/>
            <person name="Almeida R."/>
            <person name="Alves-Junior L."/>
            <person name="Assuncao E.N."/>
            <person name="Azevedo V.A.C."/>
            <person name="Bogo M.R."/>
            <person name="Brigido M.M."/>
            <person name="Brocchi M."/>
            <person name="Burity H.A."/>
            <person name="Camargo A.A."/>
            <person name="Camargo S.S."/>
            <person name="Carepo M.S."/>
            <person name="Carraro D.M."/>
            <person name="de Mattos Cascardo J.C."/>
            <person name="Castro L.A."/>
            <person name="Cavalcanti G."/>
            <person name="Chemale G."/>
            <person name="Collevatti R.G."/>
            <person name="Cunha C.W."/>
            <person name="Dallagiovanna B."/>
            <person name="Dambros B.P."/>
            <person name="Dellagostin O.A."/>
            <person name="Falcao C."/>
            <person name="Fantinatti-Garboggini F."/>
            <person name="Felipe M.S.S."/>
            <person name="Fiorentin L."/>
            <person name="Franco G.R."/>
            <person name="Freitas N.S.A."/>
            <person name="Frias D."/>
            <person name="Grangeiro T.B."/>
            <person name="Grisard E.C."/>
            <person name="Guimaraes C.T."/>
            <person name="Hungria M."/>
            <person name="Jardim S.N."/>
            <person name="Krieger M.A."/>
            <person name="Laurino J.P."/>
            <person name="Lima L.F.A."/>
            <person name="Lopes M.I."/>
            <person name="Loreto E.L.S."/>
            <person name="Madeira H.M.F."/>
            <person name="Manfio G.P."/>
            <person name="Maranhao A.Q."/>
            <person name="Martinkovics C.T."/>
            <person name="Medeiros S.R.B."/>
            <person name="Moreira M.A.M."/>
            <person name="Neiva M."/>
            <person name="Ramalho-Neto C.E."/>
            <person name="Nicolas M.F."/>
            <person name="Oliveira S.C."/>
            <person name="Paixao R.F.C."/>
            <person name="Pedrosa F.O."/>
            <person name="Pena S.D.J."/>
            <person name="Pereira M."/>
            <person name="Pereira-Ferrari L."/>
            <person name="Piffer I."/>
            <person name="Pinto L.S."/>
            <person name="Potrich D.P."/>
            <person name="Salim A.C.M."/>
            <person name="Santos F.R."/>
            <person name="Schmitt R."/>
            <person name="Schneider M.P.C."/>
            <person name="Schrank A."/>
            <person name="Schrank I.S."/>
            <person name="Schuck A.F."/>
            <person name="Seuanez H.N."/>
            <person name="Silva D.W."/>
            <person name="Silva R."/>
            <person name="Silva S.C."/>
            <person name="Soares C.M.A."/>
            <person name="Souza K.R.L."/>
            <person name="Souza R.C."/>
            <person name="Staats C.C."/>
            <person name="Steffens M.B.R."/>
            <person name="Teixeira S.M.R."/>
            <person name="Urmenyi T.P."/>
            <person name="Vainstein M.H."/>
            <person name="Zuccherato L.W."/>
            <person name="Simpson A.J.G."/>
            <person name="Zaha A."/>
        </authorList>
    </citation>
    <scope>NUCLEOTIDE SEQUENCE [LARGE SCALE GENOMIC DNA]</scope>
    <source>
        <strain>53</strain>
    </source>
</reference>
<organism>
    <name type="scientific">Mycoplasmopsis synoviae (strain 53)</name>
    <name type="common">Mycoplasma synoviae</name>
    <dbReference type="NCBI Taxonomy" id="262723"/>
    <lineage>
        <taxon>Bacteria</taxon>
        <taxon>Bacillati</taxon>
        <taxon>Mycoplasmatota</taxon>
        <taxon>Mycoplasmoidales</taxon>
        <taxon>Metamycoplasmataceae</taxon>
        <taxon>Mycoplasmopsis</taxon>
    </lineage>
</organism>
<dbReference type="EMBL" id="AE017245">
    <property type="protein sequence ID" value="AAZ44036.2"/>
    <property type="molecule type" value="Genomic_DNA"/>
</dbReference>
<dbReference type="RefSeq" id="WP_020003146.1">
    <property type="nucleotide sequence ID" value="NC_007294.1"/>
</dbReference>
<dbReference type="SMR" id="Q4A5D5"/>
<dbReference type="STRING" id="262723.MS53_0629"/>
<dbReference type="GeneID" id="93530419"/>
<dbReference type="KEGG" id="msy:MS53_0629"/>
<dbReference type="eggNOG" id="COG0096">
    <property type="taxonomic scope" value="Bacteria"/>
</dbReference>
<dbReference type="HOGENOM" id="CLU_098428_0_2_14"/>
<dbReference type="OrthoDB" id="9802617at2"/>
<dbReference type="Proteomes" id="UP000000549">
    <property type="component" value="Chromosome"/>
</dbReference>
<dbReference type="GO" id="GO:1990904">
    <property type="term" value="C:ribonucleoprotein complex"/>
    <property type="evidence" value="ECO:0007669"/>
    <property type="project" value="UniProtKB-KW"/>
</dbReference>
<dbReference type="GO" id="GO:0005840">
    <property type="term" value="C:ribosome"/>
    <property type="evidence" value="ECO:0007669"/>
    <property type="project" value="UniProtKB-KW"/>
</dbReference>
<dbReference type="GO" id="GO:0019843">
    <property type="term" value="F:rRNA binding"/>
    <property type="evidence" value="ECO:0007669"/>
    <property type="project" value="UniProtKB-UniRule"/>
</dbReference>
<dbReference type="GO" id="GO:0003735">
    <property type="term" value="F:structural constituent of ribosome"/>
    <property type="evidence" value="ECO:0007669"/>
    <property type="project" value="InterPro"/>
</dbReference>
<dbReference type="GO" id="GO:0006412">
    <property type="term" value="P:translation"/>
    <property type="evidence" value="ECO:0007669"/>
    <property type="project" value="UniProtKB-UniRule"/>
</dbReference>
<dbReference type="FunFam" id="3.30.1370.30:FF:000002">
    <property type="entry name" value="30S ribosomal protein S8"/>
    <property type="match status" value="1"/>
</dbReference>
<dbReference type="FunFam" id="3.30.1490.10:FF:000001">
    <property type="entry name" value="30S ribosomal protein S8"/>
    <property type="match status" value="1"/>
</dbReference>
<dbReference type="Gene3D" id="3.30.1370.30">
    <property type="match status" value="1"/>
</dbReference>
<dbReference type="Gene3D" id="3.30.1490.10">
    <property type="match status" value="1"/>
</dbReference>
<dbReference type="HAMAP" id="MF_01302_B">
    <property type="entry name" value="Ribosomal_uS8_B"/>
    <property type="match status" value="1"/>
</dbReference>
<dbReference type="InterPro" id="IPR000630">
    <property type="entry name" value="Ribosomal_uS8"/>
</dbReference>
<dbReference type="InterPro" id="IPR035987">
    <property type="entry name" value="Ribosomal_uS8_sf"/>
</dbReference>
<dbReference type="NCBIfam" id="NF001109">
    <property type="entry name" value="PRK00136.1"/>
    <property type="match status" value="1"/>
</dbReference>
<dbReference type="PANTHER" id="PTHR11758">
    <property type="entry name" value="40S RIBOSOMAL PROTEIN S15A"/>
    <property type="match status" value="1"/>
</dbReference>
<dbReference type="Pfam" id="PF00410">
    <property type="entry name" value="Ribosomal_S8"/>
    <property type="match status" value="1"/>
</dbReference>
<dbReference type="SUPFAM" id="SSF56047">
    <property type="entry name" value="Ribosomal protein S8"/>
    <property type="match status" value="1"/>
</dbReference>
<name>RS8_MYCS5</name>
<protein>
    <recommendedName>
        <fullName evidence="1">Small ribosomal subunit protein uS8</fullName>
    </recommendedName>
    <alternativeName>
        <fullName evidence="2">30S ribosomal protein S8</fullName>
    </alternativeName>
</protein>
<sequence>MFLTDPISDLIVRIKNANQRKHKTVEIPHSNKKEAIVKLIKEEGYISSYSVEGSKKTDKRLLVTLKYKGKQSAIVGIKRVSKPGLRVYVKSEEIPKVLSGYGTCIMSTSKGLMTDKEARKANVGGEIIAFIW</sequence>
<feature type="chain" id="PRO_0000225875" description="Small ribosomal subunit protein uS8">
    <location>
        <begin position="1"/>
        <end position="132"/>
    </location>
</feature>
<comment type="function">
    <text evidence="1">One of the primary rRNA binding proteins, it binds directly to 16S rRNA central domain where it helps coordinate assembly of the platform of the 30S subunit.</text>
</comment>
<comment type="subunit">
    <text evidence="1">Part of the 30S ribosomal subunit. Contacts proteins S5 and S12.</text>
</comment>
<comment type="similarity">
    <text evidence="1">Belongs to the universal ribosomal protein uS8 family.</text>
</comment>